<gene>
    <name evidence="1" type="primary">ybeY</name>
    <name type="ordered locus">MYPE3350</name>
</gene>
<name>YBEY_MALP2</name>
<protein>
    <recommendedName>
        <fullName evidence="1">Endoribonuclease YbeY</fullName>
        <ecNumber evidence="1">3.1.-.-</ecNumber>
    </recommendedName>
</protein>
<proteinExistence type="inferred from homology"/>
<reference key="1">
    <citation type="journal article" date="2002" name="Nucleic Acids Res.">
        <title>The complete genomic sequence of Mycoplasma penetrans, an intracellular bacterial pathogen in humans.</title>
        <authorList>
            <person name="Sasaki Y."/>
            <person name="Ishikawa J."/>
            <person name="Yamashita A."/>
            <person name="Oshima K."/>
            <person name="Kenri T."/>
            <person name="Furuya K."/>
            <person name="Yoshino C."/>
            <person name="Horino A."/>
            <person name="Shiba T."/>
            <person name="Sasaki T."/>
            <person name="Hattori M."/>
        </authorList>
    </citation>
    <scope>NUCLEOTIDE SEQUENCE [LARGE SCALE GENOMIC DNA]</scope>
    <source>
        <strain>HF-2</strain>
    </source>
</reference>
<comment type="function">
    <text evidence="1">Single strand-specific metallo-endoribonuclease involved in late-stage 70S ribosome quality control and in maturation of the 3' terminus of the 16S rRNA.</text>
</comment>
<comment type="cofactor">
    <cofactor evidence="1">
        <name>Zn(2+)</name>
        <dbReference type="ChEBI" id="CHEBI:29105"/>
    </cofactor>
    <text evidence="1">Binds 1 zinc ion.</text>
</comment>
<comment type="subcellular location">
    <subcellularLocation>
        <location evidence="1">Cytoplasm</location>
    </subcellularLocation>
</comment>
<comment type="similarity">
    <text evidence="1">Belongs to the endoribonuclease YbeY family.</text>
</comment>
<dbReference type="EC" id="3.1.-.-" evidence="1"/>
<dbReference type="EMBL" id="BA000026">
    <property type="protein sequence ID" value="BAC44128.1"/>
    <property type="molecule type" value="Genomic_DNA"/>
</dbReference>
<dbReference type="RefSeq" id="WP_011077164.1">
    <property type="nucleotide sequence ID" value="NC_004432.1"/>
</dbReference>
<dbReference type="SMR" id="Q8EW68"/>
<dbReference type="FunCoup" id="Q8EW68">
    <property type="interactions" value="191"/>
</dbReference>
<dbReference type="STRING" id="272633.gene:10731440"/>
<dbReference type="KEGG" id="mpe:MYPE3350"/>
<dbReference type="eggNOG" id="COG0319">
    <property type="taxonomic scope" value="Bacteria"/>
</dbReference>
<dbReference type="HOGENOM" id="CLU_106710_3_0_14"/>
<dbReference type="InParanoid" id="Q8EW68"/>
<dbReference type="Proteomes" id="UP000002522">
    <property type="component" value="Chromosome"/>
</dbReference>
<dbReference type="GO" id="GO:0005737">
    <property type="term" value="C:cytoplasm"/>
    <property type="evidence" value="ECO:0007669"/>
    <property type="project" value="UniProtKB-SubCell"/>
</dbReference>
<dbReference type="GO" id="GO:0004222">
    <property type="term" value="F:metalloendopeptidase activity"/>
    <property type="evidence" value="ECO:0007669"/>
    <property type="project" value="InterPro"/>
</dbReference>
<dbReference type="GO" id="GO:0004521">
    <property type="term" value="F:RNA endonuclease activity"/>
    <property type="evidence" value="ECO:0007669"/>
    <property type="project" value="UniProtKB-UniRule"/>
</dbReference>
<dbReference type="GO" id="GO:0008270">
    <property type="term" value="F:zinc ion binding"/>
    <property type="evidence" value="ECO:0007669"/>
    <property type="project" value="UniProtKB-UniRule"/>
</dbReference>
<dbReference type="GO" id="GO:0006364">
    <property type="term" value="P:rRNA processing"/>
    <property type="evidence" value="ECO:0007669"/>
    <property type="project" value="UniProtKB-UniRule"/>
</dbReference>
<dbReference type="Gene3D" id="3.40.390.30">
    <property type="entry name" value="Metalloproteases ('zincins'), catalytic domain"/>
    <property type="match status" value="1"/>
</dbReference>
<dbReference type="HAMAP" id="MF_00009">
    <property type="entry name" value="Endoribonucl_YbeY"/>
    <property type="match status" value="1"/>
</dbReference>
<dbReference type="InterPro" id="IPR023091">
    <property type="entry name" value="MetalPrtase_cat_dom_sf_prd"/>
</dbReference>
<dbReference type="InterPro" id="IPR002036">
    <property type="entry name" value="YbeY"/>
</dbReference>
<dbReference type="InterPro" id="IPR020549">
    <property type="entry name" value="YbeY_CS"/>
</dbReference>
<dbReference type="NCBIfam" id="TIGR00043">
    <property type="entry name" value="rRNA maturation RNase YbeY"/>
    <property type="match status" value="1"/>
</dbReference>
<dbReference type="PANTHER" id="PTHR46986">
    <property type="entry name" value="ENDORIBONUCLEASE YBEY, CHLOROPLASTIC"/>
    <property type="match status" value="1"/>
</dbReference>
<dbReference type="PANTHER" id="PTHR46986:SF1">
    <property type="entry name" value="ENDORIBONUCLEASE YBEY, CHLOROPLASTIC"/>
    <property type="match status" value="1"/>
</dbReference>
<dbReference type="Pfam" id="PF02130">
    <property type="entry name" value="YbeY"/>
    <property type="match status" value="1"/>
</dbReference>
<dbReference type="SUPFAM" id="SSF55486">
    <property type="entry name" value="Metalloproteases ('zincins'), catalytic domain"/>
    <property type="match status" value="1"/>
</dbReference>
<dbReference type="PROSITE" id="PS01306">
    <property type="entry name" value="UPF0054"/>
    <property type="match status" value="1"/>
</dbReference>
<feature type="chain" id="PRO_0000102492" description="Endoribonuclease YbeY">
    <location>
        <begin position="1"/>
        <end position="150"/>
    </location>
</feature>
<feature type="binding site" evidence="1">
    <location>
        <position position="113"/>
    </location>
    <ligand>
        <name>Zn(2+)</name>
        <dbReference type="ChEBI" id="CHEBI:29105"/>
        <note>catalytic</note>
    </ligand>
</feature>
<feature type="binding site" evidence="1">
    <location>
        <position position="117"/>
    </location>
    <ligand>
        <name>Zn(2+)</name>
        <dbReference type="ChEBI" id="CHEBI:29105"/>
        <note>catalytic</note>
    </ligand>
</feature>
<feature type="binding site" evidence="1">
    <location>
        <position position="123"/>
    </location>
    <ligand>
        <name>Zn(2+)</name>
        <dbReference type="ChEBI" id="CHEBI:29105"/>
        <note>catalytic</note>
    </ligand>
</feature>
<accession>Q8EW68</accession>
<organism>
    <name type="scientific">Malacoplasma penetrans (strain HF-2)</name>
    <name type="common">Mycoplasma penetrans</name>
    <dbReference type="NCBI Taxonomy" id="272633"/>
    <lineage>
        <taxon>Bacteria</taxon>
        <taxon>Bacillati</taxon>
        <taxon>Mycoplasmatota</taxon>
        <taxon>Mycoplasmoidales</taxon>
        <taxon>Mycoplasmoidaceae</taxon>
        <taxon>Malacoplasma</taxon>
    </lineage>
</organism>
<evidence type="ECO:0000255" key="1">
    <source>
        <dbReference type="HAMAP-Rule" id="MF_00009"/>
    </source>
</evidence>
<keyword id="KW-0963">Cytoplasm</keyword>
<keyword id="KW-0255">Endonuclease</keyword>
<keyword id="KW-0378">Hydrolase</keyword>
<keyword id="KW-0479">Metal-binding</keyword>
<keyword id="KW-0540">Nuclease</keyword>
<keyword id="KW-1185">Reference proteome</keyword>
<keyword id="KW-0690">Ribosome biogenesis</keyword>
<keyword id="KW-0698">rRNA processing</keyword>
<keyword id="KW-0862">Zinc</keyword>
<sequence>MFDVQIFDEKKFLSKKDISLIKKVSKFIFIEEKLKNKIIFELHIIDNNESQKINKQYRNKDYPTDVISFSFWEEGLLKTALLGEIYLSYEKVVSQAEEFKHSFERELGFLVSHGIYHLLGYDHEEEDEAKIMFGKQYQVLKLCGLGSVND</sequence>